<gene>
    <name evidence="1" type="primary">mscL</name>
    <name type="ordered locus">Asuc_0245</name>
</gene>
<accession>A6VKX7</accession>
<comment type="function">
    <text evidence="1">Channel that opens in response to stretch forces in the membrane lipid bilayer. May participate in the regulation of osmotic pressure changes within the cell.</text>
</comment>
<comment type="subunit">
    <text evidence="1">Homopentamer.</text>
</comment>
<comment type="subcellular location">
    <subcellularLocation>
        <location evidence="1">Cell inner membrane</location>
        <topology evidence="1">Multi-pass membrane protein</topology>
    </subcellularLocation>
</comment>
<comment type="similarity">
    <text evidence="1">Belongs to the MscL family.</text>
</comment>
<reference key="1">
    <citation type="journal article" date="2010" name="BMC Genomics">
        <title>A genomic perspective on the potential of Actinobacillus succinogenes for industrial succinate production.</title>
        <authorList>
            <person name="McKinlay J.B."/>
            <person name="Laivenieks M."/>
            <person name="Schindler B.D."/>
            <person name="McKinlay A.A."/>
            <person name="Siddaramappa S."/>
            <person name="Challacombe J.F."/>
            <person name="Lowry S.R."/>
            <person name="Clum A."/>
            <person name="Lapidus A.L."/>
            <person name="Burkhart K.B."/>
            <person name="Harkins V."/>
            <person name="Vieille C."/>
        </authorList>
    </citation>
    <scope>NUCLEOTIDE SEQUENCE [LARGE SCALE GENOMIC DNA]</scope>
    <source>
        <strain>ATCC 55618 / DSM 22257 / CCUG 43843 / 130Z</strain>
    </source>
</reference>
<feature type="chain" id="PRO_1000071345" description="Large-conductance mechanosensitive channel">
    <location>
        <begin position="1"/>
        <end position="128"/>
    </location>
</feature>
<feature type="transmembrane region" description="Helical" evidence="1">
    <location>
        <begin position="10"/>
        <end position="30"/>
    </location>
</feature>
<feature type="transmembrane region" description="Helical" evidence="1">
    <location>
        <begin position="76"/>
        <end position="96"/>
    </location>
</feature>
<sequence>MSFIKEFREFAMRGNVVDMAVGVIIGGAFGKIVSSLVGDVVMPVLGILTGGVDFKDMKMVLAEAVGETPAVTLNYGMFIQNVFDFIIIAFAIFLMIKAINKLKKPAEEAPKGPSQEELLAEIRDLLKK</sequence>
<protein>
    <recommendedName>
        <fullName evidence="1">Large-conductance mechanosensitive channel</fullName>
    </recommendedName>
</protein>
<proteinExistence type="inferred from homology"/>
<dbReference type="EMBL" id="CP000746">
    <property type="protein sequence ID" value="ABR73624.1"/>
    <property type="molecule type" value="Genomic_DNA"/>
</dbReference>
<dbReference type="RefSeq" id="WP_011978900.1">
    <property type="nucleotide sequence ID" value="NC_009655.1"/>
</dbReference>
<dbReference type="SMR" id="A6VKX7"/>
<dbReference type="STRING" id="339671.Asuc_0245"/>
<dbReference type="KEGG" id="asu:Asuc_0245"/>
<dbReference type="eggNOG" id="COG1970">
    <property type="taxonomic scope" value="Bacteria"/>
</dbReference>
<dbReference type="HOGENOM" id="CLU_095787_0_0_6"/>
<dbReference type="OrthoDB" id="9810350at2"/>
<dbReference type="Proteomes" id="UP000001114">
    <property type="component" value="Chromosome"/>
</dbReference>
<dbReference type="GO" id="GO:0005886">
    <property type="term" value="C:plasma membrane"/>
    <property type="evidence" value="ECO:0007669"/>
    <property type="project" value="UniProtKB-SubCell"/>
</dbReference>
<dbReference type="GO" id="GO:0008381">
    <property type="term" value="F:mechanosensitive monoatomic ion channel activity"/>
    <property type="evidence" value="ECO:0007669"/>
    <property type="project" value="UniProtKB-UniRule"/>
</dbReference>
<dbReference type="FunFam" id="1.10.1200.120:FF:000001">
    <property type="entry name" value="Large-conductance mechanosensitive channel"/>
    <property type="match status" value="1"/>
</dbReference>
<dbReference type="Gene3D" id="1.10.1200.120">
    <property type="entry name" value="Large-conductance mechanosensitive channel, MscL, domain 1"/>
    <property type="match status" value="1"/>
</dbReference>
<dbReference type="HAMAP" id="MF_00115">
    <property type="entry name" value="MscL"/>
    <property type="match status" value="1"/>
</dbReference>
<dbReference type="InterPro" id="IPR019823">
    <property type="entry name" value="Mechanosensitive_channel_CS"/>
</dbReference>
<dbReference type="InterPro" id="IPR001185">
    <property type="entry name" value="MS_channel"/>
</dbReference>
<dbReference type="InterPro" id="IPR037673">
    <property type="entry name" value="MSC/AndL"/>
</dbReference>
<dbReference type="InterPro" id="IPR036019">
    <property type="entry name" value="MscL_channel"/>
</dbReference>
<dbReference type="NCBIfam" id="TIGR00220">
    <property type="entry name" value="mscL"/>
    <property type="match status" value="1"/>
</dbReference>
<dbReference type="NCBIfam" id="NF001843">
    <property type="entry name" value="PRK00567.1-4"/>
    <property type="match status" value="1"/>
</dbReference>
<dbReference type="PANTHER" id="PTHR30266:SF2">
    <property type="entry name" value="LARGE-CONDUCTANCE MECHANOSENSITIVE CHANNEL"/>
    <property type="match status" value="1"/>
</dbReference>
<dbReference type="PANTHER" id="PTHR30266">
    <property type="entry name" value="MECHANOSENSITIVE CHANNEL MSCL"/>
    <property type="match status" value="1"/>
</dbReference>
<dbReference type="Pfam" id="PF01741">
    <property type="entry name" value="MscL"/>
    <property type="match status" value="1"/>
</dbReference>
<dbReference type="PRINTS" id="PR01264">
    <property type="entry name" value="MECHCHANNEL"/>
</dbReference>
<dbReference type="SUPFAM" id="SSF81330">
    <property type="entry name" value="Gated mechanosensitive channel"/>
    <property type="match status" value="1"/>
</dbReference>
<dbReference type="PROSITE" id="PS01327">
    <property type="entry name" value="MSCL"/>
    <property type="match status" value="1"/>
</dbReference>
<keyword id="KW-0997">Cell inner membrane</keyword>
<keyword id="KW-1003">Cell membrane</keyword>
<keyword id="KW-0407">Ion channel</keyword>
<keyword id="KW-0406">Ion transport</keyword>
<keyword id="KW-0472">Membrane</keyword>
<keyword id="KW-1185">Reference proteome</keyword>
<keyword id="KW-0812">Transmembrane</keyword>
<keyword id="KW-1133">Transmembrane helix</keyword>
<keyword id="KW-0813">Transport</keyword>
<name>MSCL_ACTSZ</name>
<organism>
    <name type="scientific">Actinobacillus succinogenes (strain ATCC 55618 / DSM 22257 / CCUG 43843 / 130Z)</name>
    <dbReference type="NCBI Taxonomy" id="339671"/>
    <lineage>
        <taxon>Bacteria</taxon>
        <taxon>Pseudomonadati</taxon>
        <taxon>Pseudomonadota</taxon>
        <taxon>Gammaproteobacteria</taxon>
        <taxon>Pasteurellales</taxon>
        <taxon>Pasteurellaceae</taxon>
        <taxon>Actinobacillus</taxon>
    </lineage>
</organism>
<evidence type="ECO:0000255" key="1">
    <source>
        <dbReference type="HAMAP-Rule" id="MF_00115"/>
    </source>
</evidence>